<comment type="function">
    <text evidence="1">Transcription factor that mediates regulation of both acid- and alkaline-expressed genes in response to ambient pH. At alkaline ambient pH, activates transcription of alkaline-expressed genes (including RIM101 itself) and represses transcription of acid-expressed genes (By similarity).</text>
</comment>
<comment type="subunit">
    <text evidence="1">Binds to DNA. Interacts with RIM20, which binds to the YPX[LI] motifs and is required for proteolytic processing (By similarity).</text>
</comment>
<comment type="subcellular location">
    <subcellularLocation>
        <location evidence="1">Cytoplasm</location>
    </subcellularLocation>
    <subcellularLocation>
        <location evidence="1">Nucleus</location>
    </subcellularLocation>
</comment>
<comment type="PTM">
    <text evidence="1">Activated by C-terminal proteolytic cleavage by signaling protease (probably palB/RIM13) at neutral to alkaline ambient pH.</text>
</comment>
<comment type="similarity">
    <text evidence="5">Belongs to the pacC/RIM101 family.</text>
</comment>
<gene>
    <name type="primary">RIM101</name>
    <name type="ordered locus">CNBL0920</name>
</gene>
<dbReference type="EMBL" id="AAEY01000056">
    <property type="protein sequence ID" value="EAL17830.1"/>
    <property type="molecule type" value="Genomic_DNA"/>
</dbReference>
<dbReference type="RefSeq" id="XP_772477.1">
    <property type="nucleotide sequence ID" value="XM_767384.1"/>
</dbReference>
<dbReference type="EnsemblFungi" id="AAW44985">
    <property type="protein sequence ID" value="AAW44985"/>
    <property type="gene ID" value="CNH00970"/>
</dbReference>
<dbReference type="GeneID" id="4939141"/>
<dbReference type="KEGG" id="cnb:CNBL0920"/>
<dbReference type="VEuPathDB" id="FungiDB:CNBL0920"/>
<dbReference type="HOGENOM" id="CLU_317828_0_0_1"/>
<dbReference type="OrthoDB" id="7478at5206"/>
<dbReference type="PHI-base" id="PHI:2749"/>
<dbReference type="GO" id="GO:0005737">
    <property type="term" value="C:cytoplasm"/>
    <property type="evidence" value="ECO:0007669"/>
    <property type="project" value="UniProtKB-SubCell"/>
</dbReference>
<dbReference type="GO" id="GO:0005634">
    <property type="term" value="C:nucleus"/>
    <property type="evidence" value="ECO:0007669"/>
    <property type="project" value="UniProtKB-SubCell"/>
</dbReference>
<dbReference type="GO" id="GO:0003677">
    <property type="term" value="F:DNA binding"/>
    <property type="evidence" value="ECO:0007669"/>
    <property type="project" value="UniProtKB-KW"/>
</dbReference>
<dbReference type="GO" id="GO:0008270">
    <property type="term" value="F:zinc ion binding"/>
    <property type="evidence" value="ECO:0007669"/>
    <property type="project" value="UniProtKB-KW"/>
</dbReference>
<dbReference type="GO" id="GO:0045944">
    <property type="term" value="P:positive regulation of transcription by RNA polymerase II"/>
    <property type="evidence" value="ECO:0007669"/>
    <property type="project" value="TreeGrafter"/>
</dbReference>
<dbReference type="FunFam" id="3.30.160.60:FF:002343">
    <property type="entry name" value="Zinc finger protein 33A"/>
    <property type="match status" value="1"/>
</dbReference>
<dbReference type="Gene3D" id="3.30.160.60">
    <property type="entry name" value="Classic Zinc Finger"/>
    <property type="match status" value="2"/>
</dbReference>
<dbReference type="InterPro" id="IPR050806">
    <property type="entry name" value="pacC/RIM101"/>
</dbReference>
<dbReference type="InterPro" id="IPR036236">
    <property type="entry name" value="Znf_C2H2_sf"/>
</dbReference>
<dbReference type="InterPro" id="IPR013087">
    <property type="entry name" value="Znf_C2H2_type"/>
</dbReference>
<dbReference type="PANTHER" id="PTHR47257">
    <property type="entry name" value="PH-RESPONSE TRANSCRIPTION FACTOR PACC/RIM101"/>
    <property type="match status" value="1"/>
</dbReference>
<dbReference type="PANTHER" id="PTHR47257:SF1">
    <property type="entry name" value="PH-RESPONSE TRANSCRIPTION FACTOR PACC_RIM101"/>
    <property type="match status" value="1"/>
</dbReference>
<dbReference type="Pfam" id="PF00096">
    <property type="entry name" value="zf-C2H2"/>
    <property type="match status" value="1"/>
</dbReference>
<dbReference type="SMART" id="SM00355">
    <property type="entry name" value="ZnF_C2H2"/>
    <property type="match status" value="3"/>
</dbReference>
<dbReference type="SUPFAM" id="SSF57667">
    <property type="entry name" value="beta-beta-alpha zinc fingers"/>
    <property type="match status" value="2"/>
</dbReference>
<dbReference type="PROSITE" id="PS00028">
    <property type="entry name" value="ZINC_FINGER_C2H2_1"/>
    <property type="match status" value="2"/>
</dbReference>
<dbReference type="PROSITE" id="PS50157">
    <property type="entry name" value="ZINC_FINGER_C2H2_2"/>
    <property type="match status" value="2"/>
</dbReference>
<name>PACC_CRYNB</name>
<feature type="chain" id="PRO_0000410344" description="pH-response transcription factor pacC/RIM101">
    <location>
        <begin position="1"/>
        <end position="917"/>
    </location>
</feature>
<feature type="zinc finger region" description="C2H2-type 1" evidence="3">
    <location>
        <begin position="67"/>
        <end position="92"/>
    </location>
</feature>
<feature type="zinc finger region" description="C2H2-type 2" evidence="3">
    <location>
        <begin position="103"/>
        <end position="127"/>
    </location>
</feature>
<feature type="zinc finger region" description="C2H2-type 3" evidence="3">
    <location>
        <begin position="133"/>
        <end position="155"/>
    </location>
</feature>
<feature type="region of interest" description="Disordered" evidence="4">
    <location>
        <begin position="1"/>
        <end position="65"/>
    </location>
</feature>
<feature type="region of interest" description="Disordered" evidence="4">
    <location>
        <begin position="157"/>
        <end position="212"/>
    </location>
</feature>
<feature type="region of interest" description="Disordered" evidence="4">
    <location>
        <begin position="406"/>
        <end position="440"/>
    </location>
</feature>
<feature type="region of interest" description="Disordered" evidence="4">
    <location>
        <begin position="465"/>
        <end position="484"/>
    </location>
</feature>
<feature type="region of interest" description="Disordered" evidence="4">
    <location>
        <begin position="522"/>
        <end position="543"/>
    </location>
</feature>
<feature type="region of interest" description="Disordered" evidence="4">
    <location>
        <begin position="628"/>
        <end position="672"/>
    </location>
</feature>
<feature type="region of interest" description="Disordered" evidence="4">
    <location>
        <begin position="686"/>
        <end position="850"/>
    </location>
</feature>
<feature type="region of interest" description="Disordered" evidence="4">
    <location>
        <begin position="888"/>
        <end position="917"/>
    </location>
</feature>
<feature type="coiled-coil region" evidence="2">
    <location>
        <begin position="873"/>
        <end position="914"/>
    </location>
</feature>
<feature type="short sequence motif" description="YPX[LI] motif">
    <location>
        <begin position="494"/>
        <end position="497"/>
    </location>
</feature>
<feature type="compositionally biased region" description="Polar residues" evidence="4">
    <location>
        <begin position="49"/>
        <end position="59"/>
    </location>
</feature>
<feature type="compositionally biased region" description="Low complexity" evidence="4">
    <location>
        <begin position="193"/>
        <end position="212"/>
    </location>
</feature>
<feature type="compositionally biased region" description="Low complexity" evidence="4">
    <location>
        <begin position="416"/>
        <end position="432"/>
    </location>
</feature>
<feature type="compositionally biased region" description="Polar residues" evidence="4">
    <location>
        <begin position="528"/>
        <end position="543"/>
    </location>
</feature>
<feature type="compositionally biased region" description="Basic and acidic residues" evidence="4">
    <location>
        <begin position="630"/>
        <end position="648"/>
    </location>
</feature>
<feature type="compositionally biased region" description="Low complexity" evidence="4">
    <location>
        <begin position="732"/>
        <end position="770"/>
    </location>
</feature>
<feature type="compositionally biased region" description="Basic and acidic residues" evidence="4">
    <location>
        <begin position="777"/>
        <end position="791"/>
    </location>
</feature>
<feature type="compositionally biased region" description="Polar residues" evidence="4">
    <location>
        <begin position="799"/>
        <end position="813"/>
    </location>
</feature>
<feature type="compositionally biased region" description="Pro residues" evidence="4">
    <location>
        <begin position="832"/>
        <end position="842"/>
    </location>
</feature>
<feature type="compositionally biased region" description="Basic and acidic residues" evidence="4">
    <location>
        <begin position="905"/>
        <end position="917"/>
    </location>
</feature>
<proteinExistence type="inferred from homology"/>
<organism>
    <name type="scientific">Cryptococcus neoformans var. neoformans serotype D (strain B-3501A)</name>
    <name type="common">Filobasidiella neoformans</name>
    <dbReference type="NCBI Taxonomy" id="283643"/>
    <lineage>
        <taxon>Eukaryota</taxon>
        <taxon>Fungi</taxon>
        <taxon>Dikarya</taxon>
        <taxon>Basidiomycota</taxon>
        <taxon>Agaricomycotina</taxon>
        <taxon>Tremellomycetes</taxon>
        <taxon>Tremellales</taxon>
        <taxon>Cryptococcaceae</taxon>
        <taxon>Cryptococcus</taxon>
        <taxon>Cryptococcus neoformans species complex</taxon>
    </lineage>
</organism>
<sequence>MAYPTLPPNLLSTPNTYSDSVSPTDPEPITPELVSREPEKPAQKAAKTAMNNTSTASKPSESKGETLPCKWTGCSHISDSPDELYDHLCTVHVGRKSTNNLCLTCGWENCGTKCVKRDHITSHLRVHTPLKPHPCAVCGKTFKRPQDLKKHERIHTAEHHQLHKLSKAPTTADPEFNSRVSLSSATRIDRPRSPLSTSLSPTSTSSHSLHSSSSPFDHLLATGFHTDKSVSPTPSALALLHKKQHEELAAYQQKEMLVLQQLAFNQQQSQAYAARLAAEPFGTGAGAKRGQADAFHDLLSDVKKRKVEPVYDQDMIHRLNALVPPSLPTSFPTLPSLGGYNQYQTFPSFNGYPSLPSLHTSIYPTTAPQAQYSNQSPLPIPEIKTEADLAMFNEFMISLGRDAAANKAGPHPMTQSASGSGASNGYSASNSGTPLSETSGGVEDLFNAEELASLGLAGMPGISIHSGGSHNSNDESTHSLSDASPPAVSFGGLYPSLDAMRNRTNSAPDVSALSGAARRPIAGLPRTSMGNAHNTSTNQSTKPSYLSGMFGHSSSQQYDGTTHNYLHGLSNEHHNDYSHSANNGATNAYASFDSLARNKQSFPAATLAPKMFHNKVYRDVAPLGTAVSKRARESAERTNVEDSDREELYADQESNHGYAVSNERAREERTPKIPVRSLIASIRTLSPSTAADGEDDLKLPAISPSHVEPGTDLPPLYSIQRGGHSSGQYRRASSLSSNSTSTSGSSSFNSSLAPSNVASGTTTPRGSTPPRGVPTKRHTEDEIVRGVKRLELGPAEPLRSTTPELPDSGTTEQALERDQKPDISALSLSSSPTPPSNNPPPSVSTANEEGKDMTIEEMRRRHAALIKSWLVAVNLQWRRKKMEEMQRQQREEMEELEEGGEAMNVDERERERVEVVA</sequence>
<evidence type="ECO:0000250" key="1"/>
<evidence type="ECO:0000255" key="2"/>
<evidence type="ECO:0000255" key="3">
    <source>
        <dbReference type="PROSITE-ProRule" id="PRU00042"/>
    </source>
</evidence>
<evidence type="ECO:0000256" key="4">
    <source>
        <dbReference type="SAM" id="MobiDB-lite"/>
    </source>
</evidence>
<evidence type="ECO:0000305" key="5"/>
<protein>
    <recommendedName>
        <fullName>pH-response transcription factor pacC/RIM101</fullName>
    </recommendedName>
</protein>
<accession>P0CS63</accession>
<accession>Q55J93</accession>
<accession>Q5KCH0</accession>
<reference key="1">
    <citation type="journal article" date="2005" name="Science">
        <title>The genome of the basidiomycetous yeast and human pathogen Cryptococcus neoformans.</title>
        <authorList>
            <person name="Loftus B.J."/>
            <person name="Fung E."/>
            <person name="Roncaglia P."/>
            <person name="Rowley D."/>
            <person name="Amedeo P."/>
            <person name="Bruno D."/>
            <person name="Vamathevan J."/>
            <person name="Miranda M."/>
            <person name="Anderson I.J."/>
            <person name="Fraser J.A."/>
            <person name="Allen J.E."/>
            <person name="Bosdet I.E."/>
            <person name="Brent M.R."/>
            <person name="Chiu R."/>
            <person name="Doering T.L."/>
            <person name="Donlin M.J."/>
            <person name="D'Souza C.A."/>
            <person name="Fox D.S."/>
            <person name="Grinberg V."/>
            <person name="Fu J."/>
            <person name="Fukushima M."/>
            <person name="Haas B.J."/>
            <person name="Huang J.C."/>
            <person name="Janbon G."/>
            <person name="Jones S.J.M."/>
            <person name="Koo H.L."/>
            <person name="Krzywinski M.I."/>
            <person name="Kwon-Chung K.J."/>
            <person name="Lengeler K.B."/>
            <person name="Maiti R."/>
            <person name="Marra M.A."/>
            <person name="Marra R.E."/>
            <person name="Mathewson C.A."/>
            <person name="Mitchell T.G."/>
            <person name="Pertea M."/>
            <person name="Riggs F.R."/>
            <person name="Salzberg S.L."/>
            <person name="Schein J.E."/>
            <person name="Shvartsbeyn A."/>
            <person name="Shin H."/>
            <person name="Shumway M."/>
            <person name="Specht C.A."/>
            <person name="Suh B.B."/>
            <person name="Tenney A."/>
            <person name="Utterback T.R."/>
            <person name="Wickes B.L."/>
            <person name="Wortman J.R."/>
            <person name="Wye N.H."/>
            <person name="Kronstad J.W."/>
            <person name="Lodge J.K."/>
            <person name="Heitman J."/>
            <person name="Davis R.W."/>
            <person name="Fraser C.M."/>
            <person name="Hyman R.W."/>
        </authorList>
    </citation>
    <scope>NUCLEOTIDE SEQUENCE [LARGE SCALE GENOMIC DNA]</scope>
    <source>
        <strain>B-3501A</strain>
    </source>
</reference>
<keyword id="KW-0010">Activator</keyword>
<keyword id="KW-0175">Coiled coil</keyword>
<keyword id="KW-0963">Cytoplasm</keyword>
<keyword id="KW-0238">DNA-binding</keyword>
<keyword id="KW-0479">Metal-binding</keyword>
<keyword id="KW-0539">Nucleus</keyword>
<keyword id="KW-0677">Repeat</keyword>
<keyword id="KW-0678">Repressor</keyword>
<keyword id="KW-0804">Transcription</keyword>
<keyword id="KW-0805">Transcription regulation</keyword>
<keyword id="KW-0862">Zinc</keyword>
<keyword id="KW-0863">Zinc-finger</keyword>